<keyword id="KW-0067">ATP-binding</keyword>
<keyword id="KW-0436">Ligase</keyword>
<keyword id="KW-0547">Nucleotide-binding</keyword>
<keyword id="KW-0648">Protein biosynthesis</keyword>
<organism>
    <name type="scientific">Dechloromonas aromatica (strain RCB)</name>
    <dbReference type="NCBI Taxonomy" id="159087"/>
    <lineage>
        <taxon>Bacteria</taxon>
        <taxon>Pseudomonadati</taxon>
        <taxon>Pseudomonadota</taxon>
        <taxon>Betaproteobacteria</taxon>
        <taxon>Rhodocyclales</taxon>
        <taxon>Azonexaceae</taxon>
        <taxon>Dechloromonas</taxon>
    </lineage>
</organism>
<protein>
    <recommendedName>
        <fullName evidence="1">Glutamyl-tRNA(Gln) amidotransferase subunit A</fullName>
        <shortName evidence="1">Glu-ADT subunit A</shortName>
        <ecNumber evidence="1">6.3.5.7</ecNumber>
    </recommendedName>
</protein>
<sequence>MINASLKELSLALAAKKVSSVELSSLFLDRIERLNPTLNAFVTVDREKSLQMARDADARIAAGTAGPLTGIPIAQKDIFCAEGWLSTCGSKMLANFVSPYDATVIRKMHAEAGLVSLGKTNMDEFAMGSSNETSFFGSVRNPWDTQRVPGGSSGGSAAAVAARLAPAATGTDTGGSIRQPAALCNLTGLKPTYGVVSRYGMIAFASSLDQGGPMAASAEDCALLLNTMVGFDERDSTSLERPVEDYARDLDKPLDGLRIGLPKEFFGEGCDAEVMAAVRAAIAEYEKLGATCVEISLPNSHLSVPAYYVIAPAEASSNLSRFDGVRYGYRAPEYGNLDDMYMKTRAQGFGAEVKRRILIGAYVLSHGYYDAYYLQAQRIRRLIANDFVEAFKHCDVIMSPTSPSTAFKLGEKAADPVQMYLSDIYTIAVNLAGLPGMSIPCGFVGGLPVGLQLIGNYFAENRLLNVAHRYQQATDWHQRRPGGIE</sequence>
<feature type="chain" id="PRO_0000241092" description="Glutamyl-tRNA(Gln) amidotransferase subunit A">
    <location>
        <begin position="1"/>
        <end position="485"/>
    </location>
</feature>
<feature type="active site" description="Charge relay system" evidence="1">
    <location>
        <position position="76"/>
    </location>
</feature>
<feature type="active site" description="Charge relay system" evidence="1">
    <location>
        <position position="152"/>
    </location>
</feature>
<feature type="active site" description="Acyl-ester intermediate" evidence="1">
    <location>
        <position position="176"/>
    </location>
</feature>
<evidence type="ECO:0000255" key="1">
    <source>
        <dbReference type="HAMAP-Rule" id="MF_00120"/>
    </source>
</evidence>
<name>GATA_DECAR</name>
<accession>Q47JV4</accession>
<dbReference type="EC" id="6.3.5.7" evidence="1"/>
<dbReference type="EMBL" id="CP000089">
    <property type="protein sequence ID" value="AAZ44877.1"/>
    <property type="molecule type" value="Genomic_DNA"/>
</dbReference>
<dbReference type="SMR" id="Q47JV4"/>
<dbReference type="STRING" id="159087.Daro_0118"/>
<dbReference type="KEGG" id="dar:Daro_0118"/>
<dbReference type="eggNOG" id="COG0154">
    <property type="taxonomic scope" value="Bacteria"/>
</dbReference>
<dbReference type="HOGENOM" id="CLU_009600_0_3_4"/>
<dbReference type="OrthoDB" id="9811471at2"/>
<dbReference type="GO" id="GO:0030956">
    <property type="term" value="C:glutamyl-tRNA(Gln) amidotransferase complex"/>
    <property type="evidence" value="ECO:0007669"/>
    <property type="project" value="InterPro"/>
</dbReference>
<dbReference type="GO" id="GO:0005524">
    <property type="term" value="F:ATP binding"/>
    <property type="evidence" value="ECO:0007669"/>
    <property type="project" value="UniProtKB-KW"/>
</dbReference>
<dbReference type="GO" id="GO:0050567">
    <property type="term" value="F:glutaminyl-tRNA synthase (glutamine-hydrolyzing) activity"/>
    <property type="evidence" value="ECO:0007669"/>
    <property type="project" value="UniProtKB-UniRule"/>
</dbReference>
<dbReference type="GO" id="GO:0006412">
    <property type="term" value="P:translation"/>
    <property type="evidence" value="ECO:0007669"/>
    <property type="project" value="UniProtKB-UniRule"/>
</dbReference>
<dbReference type="Gene3D" id="3.90.1300.10">
    <property type="entry name" value="Amidase signature (AS) domain"/>
    <property type="match status" value="1"/>
</dbReference>
<dbReference type="HAMAP" id="MF_00120">
    <property type="entry name" value="GatA"/>
    <property type="match status" value="1"/>
</dbReference>
<dbReference type="InterPro" id="IPR000120">
    <property type="entry name" value="Amidase"/>
</dbReference>
<dbReference type="InterPro" id="IPR020556">
    <property type="entry name" value="Amidase_CS"/>
</dbReference>
<dbReference type="InterPro" id="IPR023631">
    <property type="entry name" value="Amidase_dom"/>
</dbReference>
<dbReference type="InterPro" id="IPR036928">
    <property type="entry name" value="AS_sf"/>
</dbReference>
<dbReference type="InterPro" id="IPR004412">
    <property type="entry name" value="GatA"/>
</dbReference>
<dbReference type="NCBIfam" id="TIGR00132">
    <property type="entry name" value="gatA"/>
    <property type="match status" value="1"/>
</dbReference>
<dbReference type="PANTHER" id="PTHR11895:SF151">
    <property type="entry name" value="GLUTAMYL-TRNA(GLN) AMIDOTRANSFERASE SUBUNIT A"/>
    <property type="match status" value="1"/>
</dbReference>
<dbReference type="PANTHER" id="PTHR11895">
    <property type="entry name" value="TRANSAMIDASE"/>
    <property type="match status" value="1"/>
</dbReference>
<dbReference type="Pfam" id="PF01425">
    <property type="entry name" value="Amidase"/>
    <property type="match status" value="1"/>
</dbReference>
<dbReference type="SUPFAM" id="SSF75304">
    <property type="entry name" value="Amidase signature (AS) enzymes"/>
    <property type="match status" value="1"/>
</dbReference>
<dbReference type="PROSITE" id="PS00571">
    <property type="entry name" value="AMIDASES"/>
    <property type="match status" value="1"/>
</dbReference>
<proteinExistence type="inferred from homology"/>
<gene>
    <name evidence="1" type="primary">gatA</name>
    <name type="ordered locus">Daro_0118</name>
</gene>
<reference key="1">
    <citation type="journal article" date="2009" name="BMC Genomics">
        <title>Metabolic analysis of the soil microbe Dechloromonas aromatica str. RCB: indications of a surprisingly complex life-style and cryptic anaerobic pathways for aromatic degradation.</title>
        <authorList>
            <person name="Salinero K.K."/>
            <person name="Keller K."/>
            <person name="Feil W.S."/>
            <person name="Feil H."/>
            <person name="Trong S."/>
            <person name="Di Bartolo G."/>
            <person name="Lapidus A."/>
        </authorList>
    </citation>
    <scope>NUCLEOTIDE SEQUENCE [LARGE SCALE GENOMIC DNA]</scope>
    <source>
        <strain>RCB</strain>
    </source>
</reference>
<comment type="function">
    <text evidence="1">Allows the formation of correctly charged Gln-tRNA(Gln) through the transamidation of misacylated Glu-tRNA(Gln) in organisms which lack glutaminyl-tRNA synthetase. The reaction takes place in the presence of glutamine and ATP through an activated gamma-phospho-Glu-tRNA(Gln).</text>
</comment>
<comment type="catalytic activity">
    <reaction evidence="1">
        <text>L-glutamyl-tRNA(Gln) + L-glutamine + ATP + H2O = L-glutaminyl-tRNA(Gln) + L-glutamate + ADP + phosphate + H(+)</text>
        <dbReference type="Rhea" id="RHEA:17521"/>
        <dbReference type="Rhea" id="RHEA-COMP:9681"/>
        <dbReference type="Rhea" id="RHEA-COMP:9684"/>
        <dbReference type="ChEBI" id="CHEBI:15377"/>
        <dbReference type="ChEBI" id="CHEBI:15378"/>
        <dbReference type="ChEBI" id="CHEBI:29985"/>
        <dbReference type="ChEBI" id="CHEBI:30616"/>
        <dbReference type="ChEBI" id="CHEBI:43474"/>
        <dbReference type="ChEBI" id="CHEBI:58359"/>
        <dbReference type="ChEBI" id="CHEBI:78520"/>
        <dbReference type="ChEBI" id="CHEBI:78521"/>
        <dbReference type="ChEBI" id="CHEBI:456216"/>
        <dbReference type="EC" id="6.3.5.7"/>
    </reaction>
</comment>
<comment type="subunit">
    <text evidence="1">Heterotrimer of A, B and C subunits.</text>
</comment>
<comment type="similarity">
    <text evidence="1">Belongs to the amidase family. GatA subfamily.</text>
</comment>